<organism>
    <name type="scientific">Pseudomonas putida (strain ATCC 47054 / DSM 6125 / CFBP 8728 / NCIMB 11950 / KT2440)</name>
    <dbReference type="NCBI Taxonomy" id="160488"/>
    <lineage>
        <taxon>Bacteria</taxon>
        <taxon>Pseudomonadati</taxon>
        <taxon>Pseudomonadota</taxon>
        <taxon>Gammaproteobacteria</taxon>
        <taxon>Pseudomonadales</taxon>
        <taxon>Pseudomonadaceae</taxon>
        <taxon>Pseudomonas</taxon>
    </lineage>
</organism>
<evidence type="ECO:0000255" key="1">
    <source>
        <dbReference type="HAMAP-Rule" id="MF_00456"/>
    </source>
</evidence>
<gene>
    <name evidence="1" type="primary">proB</name>
    <name type="ordered locus">PP_0691</name>
</gene>
<proteinExistence type="inferred from homology"/>
<comment type="function">
    <text evidence="1">Catalyzes the transfer of a phosphate group to glutamate to form L-glutamate 5-phosphate.</text>
</comment>
<comment type="catalytic activity">
    <reaction evidence="1">
        <text>L-glutamate + ATP = L-glutamyl 5-phosphate + ADP</text>
        <dbReference type="Rhea" id="RHEA:14877"/>
        <dbReference type="ChEBI" id="CHEBI:29985"/>
        <dbReference type="ChEBI" id="CHEBI:30616"/>
        <dbReference type="ChEBI" id="CHEBI:58274"/>
        <dbReference type="ChEBI" id="CHEBI:456216"/>
        <dbReference type="EC" id="2.7.2.11"/>
    </reaction>
</comment>
<comment type="pathway">
    <text evidence="1">Amino-acid biosynthesis; L-proline biosynthesis; L-glutamate 5-semialdehyde from L-glutamate: step 1/2.</text>
</comment>
<comment type="subcellular location">
    <subcellularLocation>
        <location evidence="1">Cytoplasm</location>
    </subcellularLocation>
</comment>
<comment type="similarity">
    <text evidence="1">Belongs to the glutamate 5-kinase family.</text>
</comment>
<accession>Q88Q07</accession>
<reference key="1">
    <citation type="journal article" date="2002" name="Environ. Microbiol.">
        <title>Complete genome sequence and comparative analysis of the metabolically versatile Pseudomonas putida KT2440.</title>
        <authorList>
            <person name="Nelson K.E."/>
            <person name="Weinel C."/>
            <person name="Paulsen I.T."/>
            <person name="Dodson R.J."/>
            <person name="Hilbert H."/>
            <person name="Martins dos Santos V.A.P."/>
            <person name="Fouts D.E."/>
            <person name="Gill S.R."/>
            <person name="Pop M."/>
            <person name="Holmes M."/>
            <person name="Brinkac L.M."/>
            <person name="Beanan M.J."/>
            <person name="DeBoy R.T."/>
            <person name="Daugherty S.C."/>
            <person name="Kolonay J.F."/>
            <person name="Madupu R."/>
            <person name="Nelson W.C."/>
            <person name="White O."/>
            <person name="Peterson J.D."/>
            <person name="Khouri H.M."/>
            <person name="Hance I."/>
            <person name="Chris Lee P."/>
            <person name="Holtzapple E.K."/>
            <person name="Scanlan D."/>
            <person name="Tran K."/>
            <person name="Moazzez A."/>
            <person name="Utterback T.R."/>
            <person name="Rizzo M."/>
            <person name="Lee K."/>
            <person name="Kosack D."/>
            <person name="Moestl D."/>
            <person name="Wedler H."/>
            <person name="Lauber J."/>
            <person name="Stjepandic D."/>
            <person name="Hoheisel J."/>
            <person name="Straetz M."/>
            <person name="Heim S."/>
            <person name="Kiewitz C."/>
            <person name="Eisen J.A."/>
            <person name="Timmis K.N."/>
            <person name="Duesterhoeft A."/>
            <person name="Tuemmler B."/>
            <person name="Fraser C.M."/>
        </authorList>
    </citation>
    <scope>NUCLEOTIDE SEQUENCE [LARGE SCALE GENOMIC DNA]</scope>
    <source>
        <strain>ATCC 47054 / DSM 6125 / CFBP 8728 / NCIMB 11950 / KT2440</strain>
    </source>
</reference>
<name>PROB_PSEPK</name>
<feature type="chain" id="PRO_0000109710" description="Glutamate 5-kinase">
    <location>
        <begin position="1"/>
        <end position="372"/>
    </location>
</feature>
<feature type="domain" description="PUA" evidence="1">
    <location>
        <begin position="280"/>
        <end position="358"/>
    </location>
</feature>
<feature type="binding site" evidence="1">
    <location>
        <position position="14"/>
    </location>
    <ligand>
        <name>ATP</name>
        <dbReference type="ChEBI" id="CHEBI:30616"/>
    </ligand>
</feature>
<feature type="binding site" evidence="1">
    <location>
        <position position="54"/>
    </location>
    <ligand>
        <name>substrate</name>
    </ligand>
</feature>
<feature type="binding site" evidence="1">
    <location>
        <position position="141"/>
    </location>
    <ligand>
        <name>substrate</name>
    </ligand>
</feature>
<feature type="binding site" evidence="1">
    <location>
        <position position="153"/>
    </location>
    <ligand>
        <name>substrate</name>
    </ligand>
</feature>
<feature type="binding site" evidence="1">
    <location>
        <begin position="173"/>
        <end position="174"/>
    </location>
    <ligand>
        <name>ATP</name>
        <dbReference type="ChEBI" id="CHEBI:30616"/>
    </ligand>
</feature>
<sequence>MRSKVTGAKRWVVKIGSALLTADGKGLDRGAMAVWVEQMVALREAGVELVLVSSGAVAAGMSQLGWTKRPSAMNELQAAASLGQMRLVQAWESSFGEHGKHTAQILLTHDDLSDRKRYLNARSTLRTLVDLGVVPVINENDTVVTDEIRFGDNDTLAALVANLVEADLLVILTDRDGMFDADPRNNPEAQLIYEARADDPSLDAVAGGTGGALGRGGMQTKLRAARLAARSGAHTIIIGGRIERVLDRLKAGERLGTLLSPERGMLAARKQWLAGHLQTRGTLVLDAGAVQALRQANKSLLPVGVKTVQGSFRRGEMVVCVGPDGVEVARGLANYSALEAQKIIGQSSEAIESILGYSAEPELVHRDNLVLV</sequence>
<keyword id="KW-0028">Amino-acid biosynthesis</keyword>
<keyword id="KW-0067">ATP-binding</keyword>
<keyword id="KW-0963">Cytoplasm</keyword>
<keyword id="KW-0418">Kinase</keyword>
<keyword id="KW-0547">Nucleotide-binding</keyword>
<keyword id="KW-0641">Proline biosynthesis</keyword>
<keyword id="KW-1185">Reference proteome</keyword>
<keyword id="KW-0808">Transferase</keyword>
<dbReference type="EC" id="2.7.2.11" evidence="1"/>
<dbReference type="EMBL" id="AE015451">
    <property type="protein sequence ID" value="AAN66316.1"/>
    <property type="molecule type" value="Genomic_DNA"/>
</dbReference>
<dbReference type="RefSeq" id="NP_742852.1">
    <property type="nucleotide sequence ID" value="NC_002947.4"/>
</dbReference>
<dbReference type="RefSeq" id="WP_003247458.1">
    <property type="nucleotide sequence ID" value="NZ_CP169744.1"/>
</dbReference>
<dbReference type="SMR" id="Q88Q07"/>
<dbReference type="STRING" id="160488.PP_0691"/>
<dbReference type="PaxDb" id="160488-PP_0691"/>
<dbReference type="GeneID" id="83678035"/>
<dbReference type="KEGG" id="ppu:PP_0691"/>
<dbReference type="PATRIC" id="fig|160488.4.peg.739"/>
<dbReference type="eggNOG" id="COG0263">
    <property type="taxonomic scope" value="Bacteria"/>
</dbReference>
<dbReference type="HOGENOM" id="CLU_025400_2_0_6"/>
<dbReference type="OrthoDB" id="9804434at2"/>
<dbReference type="PhylomeDB" id="Q88Q07"/>
<dbReference type="BioCyc" id="PPUT160488:G1G01-763-MONOMER"/>
<dbReference type="UniPathway" id="UPA00098">
    <property type="reaction ID" value="UER00359"/>
</dbReference>
<dbReference type="Proteomes" id="UP000000556">
    <property type="component" value="Chromosome"/>
</dbReference>
<dbReference type="GO" id="GO:0005829">
    <property type="term" value="C:cytosol"/>
    <property type="evidence" value="ECO:0007669"/>
    <property type="project" value="TreeGrafter"/>
</dbReference>
<dbReference type="GO" id="GO:0005524">
    <property type="term" value="F:ATP binding"/>
    <property type="evidence" value="ECO:0007669"/>
    <property type="project" value="UniProtKB-KW"/>
</dbReference>
<dbReference type="GO" id="GO:0004349">
    <property type="term" value="F:glutamate 5-kinase activity"/>
    <property type="evidence" value="ECO:0007669"/>
    <property type="project" value="UniProtKB-UniRule"/>
</dbReference>
<dbReference type="GO" id="GO:0003723">
    <property type="term" value="F:RNA binding"/>
    <property type="evidence" value="ECO:0007669"/>
    <property type="project" value="InterPro"/>
</dbReference>
<dbReference type="GO" id="GO:0055129">
    <property type="term" value="P:L-proline biosynthetic process"/>
    <property type="evidence" value="ECO:0007669"/>
    <property type="project" value="UniProtKB-UniRule"/>
</dbReference>
<dbReference type="CDD" id="cd04242">
    <property type="entry name" value="AAK_G5K_ProB"/>
    <property type="match status" value="1"/>
</dbReference>
<dbReference type="CDD" id="cd21157">
    <property type="entry name" value="PUA_G5K"/>
    <property type="match status" value="1"/>
</dbReference>
<dbReference type="FunFam" id="2.30.130.10:FF:000007">
    <property type="entry name" value="Glutamate 5-kinase"/>
    <property type="match status" value="1"/>
</dbReference>
<dbReference type="FunFam" id="3.40.1160.10:FF:000018">
    <property type="entry name" value="Glutamate 5-kinase"/>
    <property type="match status" value="1"/>
</dbReference>
<dbReference type="Gene3D" id="3.40.1160.10">
    <property type="entry name" value="Acetylglutamate kinase-like"/>
    <property type="match status" value="2"/>
</dbReference>
<dbReference type="Gene3D" id="2.30.130.10">
    <property type="entry name" value="PUA domain"/>
    <property type="match status" value="1"/>
</dbReference>
<dbReference type="HAMAP" id="MF_00456">
    <property type="entry name" value="ProB"/>
    <property type="match status" value="1"/>
</dbReference>
<dbReference type="InterPro" id="IPR036393">
    <property type="entry name" value="AceGlu_kinase-like_sf"/>
</dbReference>
<dbReference type="InterPro" id="IPR001048">
    <property type="entry name" value="Asp/Glu/Uridylate_kinase"/>
</dbReference>
<dbReference type="InterPro" id="IPR041739">
    <property type="entry name" value="G5K_ProB"/>
</dbReference>
<dbReference type="InterPro" id="IPR001057">
    <property type="entry name" value="Glu/AcGlu_kinase"/>
</dbReference>
<dbReference type="InterPro" id="IPR011529">
    <property type="entry name" value="Glu_5kinase"/>
</dbReference>
<dbReference type="InterPro" id="IPR005715">
    <property type="entry name" value="Glu_5kinase/COase_Synthase"/>
</dbReference>
<dbReference type="InterPro" id="IPR019797">
    <property type="entry name" value="Glutamate_5-kinase_CS"/>
</dbReference>
<dbReference type="InterPro" id="IPR002478">
    <property type="entry name" value="PUA"/>
</dbReference>
<dbReference type="InterPro" id="IPR015947">
    <property type="entry name" value="PUA-like_sf"/>
</dbReference>
<dbReference type="InterPro" id="IPR036974">
    <property type="entry name" value="PUA_sf"/>
</dbReference>
<dbReference type="NCBIfam" id="TIGR01027">
    <property type="entry name" value="proB"/>
    <property type="match status" value="1"/>
</dbReference>
<dbReference type="PANTHER" id="PTHR43654">
    <property type="entry name" value="GLUTAMATE 5-KINASE"/>
    <property type="match status" value="1"/>
</dbReference>
<dbReference type="PANTHER" id="PTHR43654:SF1">
    <property type="entry name" value="ISOPENTENYL PHOSPHATE KINASE"/>
    <property type="match status" value="1"/>
</dbReference>
<dbReference type="Pfam" id="PF00696">
    <property type="entry name" value="AA_kinase"/>
    <property type="match status" value="1"/>
</dbReference>
<dbReference type="Pfam" id="PF01472">
    <property type="entry name" value="PUA"/>
    <property type="match status" value="1"/>
</dbReference>
<dbReference type="PIRSF" id="PIRSF000729">
    <property type="entry name" value="GK"/>
    <property type="match status" value="1"/>
</dbReference>
<dbReference type="PRINTS" id="PR00474">
    <property type="entry name" value="GLU5KINASE"/>
</dbReference>
<dbReference type="SMART" id="SM00359">
    <property type="entry name" value="PUA"/>
    <property type="match status" value="1"/>
</dbReference>
<dbReference type="SUPFAM" id="SSF53633">
    <property type="entry name" value="Carbamate kinase-like"/>
    <property type="match status" value="1"/>
</dbReference>
<dbReference type="SUPFAM" id="SSF88697">
    <property type="entry name" value="PUA domain-like"/>
    <property type="match status" value="1"/>
</dbReference>
<dbReference type="PROSITE" id="PS00902">
    <property type="entry name" value="GLUTAMATE_5_KINASE"/>
    <property type="match status" value="1"/>
</dbReference>
<dbReference type="PROSITE" id="PS50890">
    <property type="entry name" value="PUA"/>
    <property type="match status" value="1"/>
</dbReference>
<protein>
    <recommendedName>
        <fullName evidence="1">Glutamate 5-kinase</fullName>
        <ecNumber evidence="1">2.7.2.11</ecNumber>
    </recommendedName>
    <alternativeName>
        <fullName evidence="1">Gamma-glutamyl kinase</fullName>
        <shortName evidence="1">GK</shortName>
    </alternativeName>
</protein>